<dbReference type="EMBL" id="AY253917">
    <property type="protein sequence ID" value="AAP69949.1"/>
    <property type="molecule type" value="mRNA"/>
</dbReference>
<dbReference type="EMBL" id="AL109810">
    <property type="status" value="NOT_ANNOTATED_CDS"/>
    <property type="molecule type" value="Genomic_DNA"/>
</dbReference>
<dbReference type="EMBL" id="AK126782">
    <property type="protein sequence ID" value="BAC86689.1"/>
    <property type="status" value="ALT_SEQ"/>
    <property type="molecule type" value="mRNA"/>
</dbReference>
<dbReference type="CCDS" id="CCDS44333.1">
    <molecule id="Q6ZTA4-3"/>
</dbReference>
<dbReference type="CCDS" id="CCDS73048.1">
    <molecule id="Q6ZTA4-2"/>
</dbReference>
<dbReference type="RefSeq" id="NP_001004342.3">
    <molecule id="Q6ZTA4-3"/>
    <property type="nucleotide sequence ID" value="NM_001004342.3"/>
</dbReference>
<dbReference type="RefSeq" id="NP_001287818.1">
    <molecule id="Q6ZTA4-2"/>
    <property type="nucleotide sequence ID" value="NM_001300889.3"/>
</dbReference>
<dbReference type="PDB" id="7QS5">
    <property type="method" value="X-ray"/>
    <property type="resolution" value="1.65 A"/>
    <property type="chains" value="A/B=606-783"/>
</dbReference>
<dbReference type="PDBsum" id="7QS5"/>
<dbReference type="SMR" id="Q6ZTA4"/>
<dbReference type="BioGRID" id="136847">
    <property type="interactions" value="4985"/>
</dbReference>
<dbReference type="FunCoup" id="Q6ZTA4">
    <property type="interactions" value="62"/>
</dbReference>
<dbReference type="IntAct" id="Q6ZTA4">
    <property type="interactions" value="2"/>
</dbReference>
<dbReference type="STRING" id="9606.ENSP00000355613"/>
<dbReference type="GlyGen" id="Q6ZTA4">
    <property type="glycosylation" value="1 site"/>
</dbReference>
<dbReference type="iPTMnet" id="Q6ZTA4"/>
<dbReference type="PhosphoSitePlus" id="Q6ZTA4"/>
<dbReference type="BioMuta" id="TRIM67"/>
<dbReference type="DMDM" id="302393802"/>
<dbReference type="jPOST" id="Q6ZTA4"/>
<dbReference type="MassIVE" id="Q6ZTA4"/>
<dbReference type="PaxDb" id="9606-ENSP00000355613"/>
<dbReference type="PeptideAtlas" id="Q6ZTA4"/>
<dbReference type="ProteomicsDB" id="68269">
    <molecule id="Q6ZTA4-3"/>
</dbReference>
<dbReference type="ProteomicsDB" id="68270">
    <molecule id="Q6ZTA4-2"/>
</dbReference>
<dbReference type="Antibodypedia" id="34683">
    <property type="antibodies" value="38 antibodies from 16 providers"/>
</dbReference>
<dbReference type="DNASU" id="440730"/>
<dbReference type="Ensembl" id="ENST00000366653.6">
    <molecule id="Q6ZTA4-3"/>
    <property type="protein sequence ID" value="ENSP00000355613.5"/>
    <property type="gene ID" value="ENSG00000119283.16"/>
</dbReference>
<dbReference type="Ensembl" id="ENST00000449018.7">
    <molecule id="Q6ZTA4-2"/>
    <property type="protein sequence ID" value="ENSP00000400163.3"/>
    <property type="gene ID" value="ENSG00000119283.16"/>
</dbReference>
<dbReference type="GeneID" id="440730"/>
<dbReference type="KEGG" id="hsa:440730"/>
<dbReference type="MANE-Select" id="ENST00000366653.6">
    <property type="protein sequence ID" value="ENSP00000355613.5"/>
    <property type="RefSeq nucleotide sequence ID" value="NM_001004342.5"/>
    <property type="RefSeq protein sequence ID" value="NP_001004342.3"/>
</dbReference>
<dbReference type="UCSC" id="uc009xfn.2">
    <molecule id="Q6ZTA4-3"/>
    <property type="organism name" value="human"/>
</dbReference>
<dbReference type="AGR" id="HGNC:31859"/>
<dbReference type="CTD" id="440730"/>
<dbReference type="DisGeNET" id="440730"/>
<dbReference type="GeneCards" id="TRIM67"/>
<dbReference type="HGNC" id="HGNC:31859">
    <property type="gene designation" value="TRIM67"/>
</dbReference>
<dbReference type="HPA" id="ENSG00000119283">
    <property type="expression patterns" value="Group enriched (brain, retina)"/>
</dbReference>
<dbReference type="MIM" id="610584">
    <property type="type" value="gene"/>
</dbReference>
<dbReference type="neXtProt" id="NX_Q6ZTA4"/>
<dbReference type="OpenTargets" id="ENSG00000119283"/>
<dbReference type="PharmGKB" id="PA134947738"/>
<dbReference type="VEuPathDB" id="HostDB:ENSG00000119283"/>
<dbReference type="eggNOG" id="KOG4367">
    <property type="taxonomic scope" value="Eukaryota"/>
</dbReference>
<dbReference type="GeneTree" id="ENSGT00940000154071"/>
<dbReference type="HOGENOM" id="CLU_013137_19_2_1"/>
<dbReference type="InParanoid" id="Q6ZTA4"/>
<dbReference type="OMA" id="GKHAKHE"/>
<dbReference type="OrthoDB" id="295536at2759"/>
<dbReference type="PAN-GO" id="Q6ZTA4">
    <property type="GO annotations" value="1 GO annotation based on evolutionary models"/>
</dbReference>
<dbReference type="PhylomeDB" id="Q6ZTA4"/>
<dbReference type="TreeFam" id="TF315216"/>
<dbReference type="PathwayCommons" id="Q6ZTA4"/>
<dbReference type="SignaLink" id="Q6ZTA4"/>
<dbReference type="SIGNOR" id="Q6ZTA4"/>
<dbReference type="BioGRID-ORCS" id="440730">
    <property type="hits" value="8 hits in 1177 CRISPR screens"/>
</dbReference>
<dbReference type="GenomeRNAi" id="440730"/>
<dbReference type="Pharos" id="Q6ZTA4">
    <property type="development level" value="Tdark"/>
</dbReference>
<dbReference type="PRO" id="PR:Q6ZTA4"/>
<dbReference type="Proteomes" id="UP000005640">
    <property type="component" value="Chromosome 1"/>
</dbReference>
<dbReference type="RNAct" id="Q6ZTA4">
    <property type="molecule type" value="protein"/>
</dbReference>
<dbReference type="Bgee" id="ENSG00000119283">
    <property type="expression patterns" value="Expressed in cortical plate and 43 other cell types or tissues"/>
</dbReference>
<dbReference type="ExpressionAtlas" id="Q6ZTA4">
    <property type="expression patterns" value="baseline and differential"/>
</dbReference>
<dbReference type="GO" id="GO:0005737">
    <property type="term" value="C:cytoplasm"/>
    <property type="evidence" value="ECO:0000318"/>
    <property type="project" value="GO_Central"/>
</dbReference>
<dbReference type="GO" id="GO:0005856">
    <property type="term" value="C:cytoskeleton"/>
    <property type="evidence" value="ECO:0007669"/>
    <property type="project" value="UniProtKB-SubCell"/>
</dbReference>
<dbReference type="GO" id="GO:0008270">
    <property type="term" value="F:zinc ion binding"/>
    <property type="evidence" value="ECO:0007669"/>
    <property type="project" value="UniProtKB-KW"/>
</dbReference>
<dbReference type="GO" id="GO:0046580">
    <property type="term" value="P:negative regulation of Ras protein signal transduction"/>
    <property type="evidence" value="ECO:0007669"/>
    <property type="project" value="Ensembl"/>
</dbReference>
<dbReference type="GO" id="GO:0010976">
    <property type="term" value="P:positive regulation of neuron projection development"/>
    <property type="evidence" value="ECO:0007669"/>
    <property type="project" value="Ensembl"/>
</dbReference>
<dbReference type="GO" id="GO:2000060">
    <property type="term" value="P:positive regulation of ubiquitin-dependent protein catabolic process"/>
    <property type="evidence" value="ECO:0007669"/>
    <property type="project" value="Ensembl"/>
</dbReference>
<dbReference type="GO" id="GO:0032880">
    <property type="term" value="P:regulation of protein localization"/>
    <property type="evidence" value="ECO:0000250"/>
    <property type="project" value="ARUK-UCL"/>
</dbReference>
<dbReference type="CDD" id="cd19844">
    <property type="entry name" value="Bbox1_TRIM67_C-I"/>
    <property type="match status" value="1"/>
</dbReference>
<dbReference type="CDD" id="cd19827">
    <property type="entry name" value="Bbox2_TRIM67_C-I"/>
    <property type="match status" value="1"/>
</dbReference>
<dbReference type="CDD" id="cd00063">
    <property type="entry name" value="FN3"/>
    <property type="match status" value="1"/>
</dbReference>
<dbReference type="CDD" id="cd16758">
    <property type="entry name" value="RING-HC_TRIM67"/>
    <property type="match status" value="1"/>
</dbReference>
<dbReference type="CDD" id="cd12889">
    <property type="entry name" value="SPRY_PRY_TRIM67_9"/>
    <property type="match status" value="1"/>
</dbReference>
<dbReference type="FunFam" id="2.60.120.920:FF:000009">
    <property type="entry name" value="E3 ubiquitin-protein ligase TRIM9 isoform X1"/>
    <property type="match status" value="1"/>
</dbReference>
<dbReference type="FunFam" id="2.60.40.10:FF:000178">
    <property type="entry name" value="E3 ubiquitin-protein ligase TRIM9 isoform X1"/>
    <property type="match status" value="1"/>
</dbReference>
<dbReference type="FunFam" id="4.10.830.40:FF:000001">
    <property type="entry name" value="E3 ubiquitin-protein ligase TRIM9 isoform X1"/>
    <property type="match status" value="1"/>
</dbReference>
<dbReference type="FunFam" id="1.20.5.170:FF:000017">
    <property type="entry name" value="Putative E3 ubiquitin-protein ligase TRIM9"/>
    <property type="match status" value="1"/>
</dbReference>
<dbReference type="FunFam" id="3.30.40.10:FF:000579">
    <property type="entry name" value="Tripartite motif-containing protein 67"/>
    <property type="match status" value="1"/>
</dbReference>
<dbReference type="Gene3D" id="1.20.5.170">
    <property type="match status" value="1"/>
</dbReference>
<dbReference type="Gene3D" id="2.60.120.920">
    <property type="match status" value="1"/>
</dbReference>
<dbReference type="Gene3D" id="4.10.830.40">
    <property type="match status" value="1"/>
</dbReference>
<dbReference type="Gene3D" id="3.30.160.60">
    <property type="entry name" value="Classic Zinc Finger"/>
    <property type="match status" value="1"/>
</dbReference>
<dbReference type="Gene3D" id="2.60.40.10">
    <property type="entry name" value="Immunoglobulins"/>
    <property type="match status" value="1"/>
</dbReference>
<dbReference type="Gene3D" id="3.30.40.10">
    <property type="entry name" value="Zinc/RING finger domain, C3HC4 (zinc finger)"/>
    <property type="match status" value="1"/>
</dbReference>
<dbReference type="InterPro" id="IPR001870">
    <property type="entry name" value="B30.2/SPRY"/>
</dbReference>
<dbReference type="InterPro" id="IPR043136">
    <property type="entry name" value="B30.2/SPRY_sf"/>
</dbReference>
<dbReference type="InterPro" id="IPR003649">
    <property type="entry name" value="Bbox_C"/>
</dbReference>
<dbReference type="InterPro" id="IPR013320">
    <property type="entry name" value="ConA-like_dom_sf"/>
</dbReference>
<dbReference type="InterPro" id="IPR017903">
    <property type="entry name" value="COS_domain"/>
</dbReference>
<dbReference type="InterPro" id="IPR050617">
    <property type="entry name" value="E3_ligase_FN3/SPRY"/>
</dbReference>
<dbReference type="InterPro" id="IPR003961">
    <property type="entry name" value="FN3_dom"/>
</dbReference>
<dbReference type="InterPro" id="IPR036116">
    <property type="entry name" value="FN3_sf"/>
</dbReference>
<dbReference type="InterPro" id="IPR013783">
    <property type="entry name" value="Ig-like_fold"/>
</dbReference>
<dbReference type="InterPro" id="IPR003877">
    <property type="entry name" value="SPRY_dom"/>
</dbReference>
<dbReference type="InterPro" id="IPR000315">
    <property type="entry name" value="Znf_B-box"/>
</dbReference>
<dbReference type="InterPro" id="IPR001841">
    <property type="entry name" value="Znf_RING"/>
</dbReference>
<dbReference type="InterPro" id="IPR013083">
    <property type="entry name" value="Znf_RING/FYVE/PHD"/>
</dbReference>
<dbReference type="InterPro" id="IPR017907">
    <property type="entry name" value="Znf_RING_CS"/>
</dbReference>
<dbReference type="PANTHER" id="PTHR24099">
    <property type="entry name" value="E3 UBIQUITIN-PROTEIN LIGASE TRIM36-RELATED"/>
    <property type="match status" value="1"/>
</dbReference>
<dbReference type="PANTHER" id="PTHR24099:SF21">
    <property type="entry name" value="TRIPARTITE MOTIF-CONTAINING PROTEIN 67"/>
    <property type="match status" value="1"/>
</dbReference>
<dbReference type="Pfam" id="PF22586">
    <property type="entry name" value="ANCHR-like_BBOX"/>
    <property type="match status" value="1"/>
</dbReference>
<dbReference type="Pfam" id="PF00041">
    <property type="entry name" value="fn3"/>
    <property type="match status" value="1"/>
</dbReference>
<dbReference type="Pfam" id="PF00622">
    <property type="entry name" value="SPRY"/>
    <property type="match status" value="1"/>
</dbReference>
<dbReference type="Pfam" id="PF00643">
    <property type="entry name" value="zf-B_box"/>
    <property type="match status" value="1"/>
</dbReference>
<dbReference type="SMART" id="SM00502">
    <property type="entry name" value="BBC"/>
    <property type="match status" value="1"/>
</dbReference>
<dbReference type="SMART" id="SM00336">
    <property type="entry name" value="BBOX"/>
    <property type="match status" value="2"/>
</dbReference>
<dbReference type="SMART" id="SM00060">
    <property type="entry name" value="FN3"/>
    <property type="match status" value="1"/>
</dbReference>
<dbReference type="SMART" id="SM00184">
    <property type="entry name" value="RING"/>
    <property type="match status" value="1"/>
</dbReference>
<dbReference type="SMART" id="SM00449">
    <property type="entry name" value="SPRY"/>
    <property type="match status" value="1"/>
</dbReference>
<dbReference type="SUPFAM" id="SSF57845">
    <property type="entry name" value="B-box zinc-binding domain"/>
    <property type="match status" value="1"/>
</dbReference>
<dbReference type="SUPFAM" id="SSF49899">
    <property type="entry name" value="Concanavalin A-like lectins/glucanases"/>
    <property type="match status" value="1"/>
</dbReference>
<dbReference type="SUPFAM" id="SSF49265">
    <property type="entry name" value="Fibronectin type III"/>
    <property type="match status" value="1"/>
</dbReference>
<dbReference type="SUPFAM" id="SSF57850">
    <property type="entry name" value="RING/U-box"/>
    <property type="match status" value="1"/>
</dbReference>
<dbReference type="PROSITE" id="PS50188">
    <property type="entry name" value="B302_SPRY"/>
    <property type="match status" value="1"/>
</dbReference>
<dbReference type="PROSITE" id="PS51262">
    <property type="entry name" value="COS"/>
    <property type="match status" value="1"/>
</dbReference>
<dbReference type="PROSITE" id="PS50853">
    <property type="entry name" value="FN3"/>
    <property type="match status" value="1"/>
</dbReference>
<dbReference type="PROSITE" id="PS50119">
    <property type="entry name" value="ZF_BBOX"/>
    <property type="match status" value="2"/>
</dbReference>
<dbReference type="PROSITE" id="PS00518">
    <property type="entry name" value="ZF_RING_1"/>
    <property type="match status" value="1"/>
</dbReference>
<reference key="1">
    <citation type="journal article" date="2006" name="J. Biol. Chem.">
        <title>Subclassification of the RBCC/TRIM superfamily reveals a novel motif necessary for microtubule binding.</title>
        <authorList>
            <person name="Short K.M."/>
            <person name="Cox T.C."/>
        </authorList>
    </citation>
    <scope>NUCLEOTIDE SEQUENCE [MRNA] (ISOFORM 2)</scope>
</reference>
<reference key="2">
    <citation type="journal article" date="2006" name="Nature">
        <title>The DNA sequence and biological annotation of human chromosome 1.</title>
        <authorList>
            <person name="Gregory S.G."/>
            <person name="Barlow K.F."/>
            <person name="McLay K.E."/>
            <person name="Kaul R."/>
            <person name="Swarbreck D."/>
            <person name="Dunham A."/>
            <person name="Scott C.E."/>
            <person name="Howe K.L."/>
            <person name="Woodfine K."/>
            <person name="Spencer C.C.A."/>
            <person name="Jones M.C."/>
            <person name="Gillson C."/>
            <person name="Searle S."/>
            <person name="Zhou Y."/>
            <person name="Kokocinski F."/>
            <person name="McDonald L."/>
            <person name="Evans R."/>
            <person name="Phillips K."/>
            <person name="Atkinson A."/>
            <person name="Cooper R."/>
            <person name="Jones C."/>
            <person name="Hall R.E."/>
            <person name="Andrews T.D."/>
            <person name="Lloyd C."/>
            <person name="Ainscough R."/>
            <person name="Almeida J.P."/>
            <person name="Ambrose K.D."/>
            <person name="Anderson F."/>
            <person name="Andrew R.W."/>
            <person name="Ashwell R.I.S."/>
            <person name="Aubin K."/>
            <person name="Babbage A.K."/>
            <person name="Bagguley C.L."/>
            <person name="Bailey J."/>
            <person name="Beasley H."/>
            <person name="Bethel G."/>
            <person name="Bird C.P."/>
            <person name="Bray-Allen S."/>
            <person name="Brown J.Y."/>
            <person name="Brown A.J."/>
            <person name="Buckley D."/>
            <person name="Burton J."/>
            <person name="Bye J."/>
            <person name="Carder C."/>
            <person name="Chapman J.C."/>
            <person name="Clark S.Y."/>
            <person name="Clarke G."/>
            <person name="Clee C."/>
            <person name="Cobley V."/>
            <person name="Collier R.E."/>
            <person name="Corby N."/>
            <person name="Coville G.J."/>
            <person name="Davies J."/>
            <person name="Deadman R."/>
            <person name="Dunn M."/>
            <person name="Earthrowl M."/>
            <person name="Ellington A.G."/>
            <person name="Errington H."/>
            <person name="Frankish A."/>
            <person name="Frankland J."/>
            <person name="French L."/>
            <person name="Garner P."/>
            <person name="Garnett J."/>
            <person name="Gay L."/>
            <person name="Ghori M.R.J."/>
            <person name="Gibson R."/>
            <person name="Gilby L.M."/>
            <person name="Gillett W."/>
            <person name="Glithero R.J."/>
            <person name="Grafham D.V."/>
            <person name="Griffiths C."/>
            <person name="Griffiths-Jones S."/>
            <person name="Grocock R."/>
            <person name="Hammond S."/>
            <person name="Harrison E.S.I."/>
            <person name="Hart E."/>
            <person name="Haugen E."/>
            <person name="Heath P.D."/>
            <person name="Holmes S."/>
            <person name="Holt K."/>
            <person name="Howden P.J."/>
            <person name="Hunt A.R."/>
            <person name="Hunt S.E."/>
            <person name="Hunter G."/>
            <person name="Isherwood J."/>
            <person name="James R."/>
            <person name="Johnson C."/>
            <person name="Johnson D."/>
            <person name="Joy A."/>
            <person name="Kay M."/>
            <person name="Kershaw J.K."/>
            <person name="Kibukawa M."/>
            <person name="Kimberley A.M."/>
            <person name="King A."/>
            <person name="Knights A.J."/>
            <person name="Lad H."/>
            <person name="Laird G."/>
            <person name="Lawlor S."/>
            <person name="Leongamornlert D.A."/>
            <person name="Lloyd D.M."/>
            <person name="Loveland J."/>
            <person name="Lovell J."/>
            <person name="Lush M.J."/>
            <person name="Lyne R."/>
            <person name="Martin S."/>
            <person name="Mashreghi-Mohammadi M."/>
            <person name="Matthews L."/>
            <person name="Matthews N.S.W."/>
            <person name="McLaren S."/>
            <person name="Milne S."/>
            <person name="Mistry S."/>
            <person name="Moore M.J.F."/>
            <person name="Nickerson T."/>
            <person name="O'Dell C.N."/>
            <person name="Oliver K."/>
            <person name="Palmeiri A."/>
            <person name="Palmer S.A."/>
            <person name="Parker A."/>
            <person name="Patel D."/>
            <person name="Pearce A.V."/>
            <person name="Peck A.I."/>
            <person name="Pelan S."/>
            <person name="Phelps K."/>
            <person name="Phillimore B.J."/>
            <person name="Plumb R."/>
            <person name="Rajan J."/>
            <person name="Raymond C."/>
            <person name="Rouse G."/>
            <person name="Saenphimmachak C."/>
            <person name="Sehra H.K."/>
            <person name="Sheridan E."/>
            <person name="Shownkeen R."/>
            <person name="Sims S."/>
            <person name="Skuce C.D."/>
            <person name="Smith M."/>
            <person name="Steward C."/>
            <person name="Subramanian S."/>
            <person name="Sycamore N."/>
            <person name="Tracey A."/>
            <person name="Tromans A."/>
            <person name="Van Helmond Z."/>
            <person name="Wall M."/>
            <person name="Wallis J.M."/>
            <person name="White S."/>
            <person name="Whitehead S.L."/>
            <person name="Wilkinson J.E."/>
            <person name="Willey D.L."/>
            <person name="Williams H."/>
            <person name="Wilming L."/>
            <person name="Wray P.W."/>
            <person name="Wu Z."/>
            <person name="Coulson A."/>
            <person name="Vaudin M."/>
            <person name="Sulston J.E."/>
            <person name="Durbin R.M."/>
            <person name="Hubbard T."/>
            <person name="Wooster R."/>
            <person name="Dunham I."/>
            <person name="Carter N.P."/>
            <person name="McVean G."/>
            <person name="Ross M.T."/>
            <person name="Harrow J."/>
            <person name="Olson M.V."/>
            <person name="Beck S."/>
            <person name="Rogers J."/>
            <person name="Bentley D.R."/>
        </authorList>
    </citation>
    <scope>NUCLEOTIDE SEQUENCE [LARGE SCALE GENOMIC DNA]</scope>
</reference>
<reference key="3">
    <citation type="journal article" date="2004" name="Nat. Genet.">
        <title>Complete sequencing and characterization of 21,243 full-length human cDNAs.</title>
        <authorList>
            <person name="Ota T."/>
            <person name="Suzuki Y."/>
            <person name="Nishikawa T."/>
            <person name="Otsuki T."/>
            <person name="Sugiyama T."/>
            <person name="Irie R."/>
            <person name="Wakamatsu A."/>
            <person name="Hayashi K."/>
            <person name="Sato H."/>
            <person name="Nagai K."/>
            <person name="Kimura K."/>
            <person name="Makita H."/>
            <person name="Sekine M."/>
            <person name="Obayashi M."/>
            <person name="Nishi T."/>
            <person name="Shibahara T."/>
            <person name="Tanaka T."/>
            <person name="Ishii S."/>
            <person name="Yamamoto J."/>
            <person name="Saito K."/>
            <person name="Kawai Y."/>
            <person name="Isono Y."/>
            <person name="Nakamura Y."/>
            <person name="Nagahari K."/>
            <person name="Murakami K."/>
            <person name="Yasuda T."/>
            <person name="Iwayanagi T."/>
            <person name="Wagatsuma M."/>
            <person name="Shiratori A."/>
            <person name="Sudo H."/>
            <person name="Hosoiri T."/>
            <person name="Kaku Y."/>
            <person name="Kodaira H."/>
            <person name="Kondo H."/>
            <person name="Sugawara M."/>
            <person name="Takahashi M."/>
            <person name="Kanda K."/>
            <person name="Yokoi T."/>
            <person name="Furuya T."/>
            <person name="Kikkawa E."/>
            <person name="Omura Y."/>
            <person name="Abe K."/>
            <person name="Kamihara K."/>
            <person name="Katsuta N."/>
            <person name="Sato K."/>
            <person name="Tanikawa M."/>
            <person name="Yamazaki M."/>
            <person name="Ninomiya K."/>
            <person name="Ishibashi T."/>
            <person name="Yamashita H."/>
            <person name="Murakawa K."/>
            <person name="Fujimori K."/>
            <person name="Tanai H."/>
            <person name="Kimata M."/>
            <person name="Watanabe M."/>
            <person name="Hiraoka S."/>
            <person name="Chiba Y."/>
            <person name="Ishida S."/>
            <person name="Ono Y."/>
            <person name="Takiguchi S."/>
            <person name="Watanabe S."/>
            <person name="Yosida M."/>
            <person name="Hotuta T."/>
            <person name="Kusano J."/>
            <person name="Kanehori K."/>
            <person name="Takahashi-Fujii A."/>
            <person name="Hara H."/>
            <person name="Tanase T.-O."/>
            <person name="Nomura Y."/>
            <person name="Togiya S."/>
            <person name="Komai F."/>
            <person name="Hara R."/>
            <person name="Takeuchi K."/>
            <person name="Arita M."/>
            <person name="Imose N."/>
            <person name="Musashino K."/>
            <person name="Yuuki H."/>
            <person name="Oshima A."/>
            <person name="Sasaki N."/>
            <person name="Aotsuka S."/>
            <person name="Yoshikawa Y."/>
            <person name="Matsunawa H."/>
            <person name="Ichihara T."/>
            <person name="Shiohata N."/>
            <person name="Sano S."/>
            <person name="Moriya S."/>
            <person name="Momiyama H."/>
            <person name="Satoh N."/>
            <person name="Takami S."/>
            <person name="Terashima Y."/>
            <person name="Suzuki O."/>
            <person name="Nakagawa S."/>
            <person name="Senoh A."/>
            <person name="Mizoguchi H."/>
            <person name="Goto Y."/>
            <person name="Shimizu F."/>
            <person name="Wakebe H."/>
            <person name="Hishigaki H."/>
            <person name="Watanabe T."/>
            <person name="Sugiyama A."/>
            <person name="Takemoto M."/>
            <person name="Kawakami B."/>
            <person name="Yamazaki M."/>
            <person name="Watanabe K."/>
            <person name="Kumagai A."/>
            <person name="Itakura S."/>
            <person name="Fukuzumi Y."/>
            <person name="Fujimori Y."/>
            <person name="Komiyama M."/>
            <person name="Tashiro H."/>
            <person name="Tanigami A."/>
            <person name="Fujiwara T."/>
            <person name="Ono T."/>
            <person name="Yamada K."/>
            <person name="Fujii Y."/>
            <person name="Ozaki K."/>
            <person name="Hirao M."/>
            <person name="Ohmori Y."/>
            <person name="Kawabata A."/>
            <person name="Hikiji T."/>
            <person name="Kobatake N."/>
            <person name="Inagaki H."/>
            <person name="Ikema Y."/>
            <person name="Okamoto S."/>
            <person name="Okitani R."/>
            <person name="Kawakami T."/>
            <person name="Noguchi S."/>
            <person name="Itoh T."/>
            <person name="Shigeta K."/>
            <person name="Senba T."/>
            <person name="Matsumura K."/>
            <person name="Nakajima Y."/>
            <person name="Mizuno T."/>
            <person name="Morinaga M."/>
            <person name="Sasaki M."/>
            <person name="Togashi T."/>
            <person name="Oyama M."/>
            <person name="Hata H."/>
            <person name="Watanabe M."/>
            <person name="Komatsu T."/>
            <person name="Mizushima-Sugano J."/>
            <person name="Satoh T."/>
            <person name="Shirai Y."/>
            <person name="Takahashi Y."/>
            <person name="Nakagawa K."/>
            <person name="Okumura K."/>
            <person name="Nagase T."/>
            <person name="Nomura N."/>
            <person name="Kikuchi H."/>
            <person name="Masuho Y."/>
            <person name="Yamashita R."/>
            <person name="Nakai K."/>
            <person name="Yada T."/>
            <person name="Nakamura Y."/>
            <person name="Ohara O."/>
            <person name="Isogai T."/>
            <person name="Sugano S."/>
        </authorList>
    </citation>
    <scope>NUCLEOTIDE SEQUENCE [LARGE SCALE MRNA] OF 1-744 (ISOFORM 1)</scope>
    <source>
        <tissue>Cerebellum</tissue>
    </source>
</reference>
<organism>
    <name type="scientific">Homo sapiens</name>
    <name type="common">Human</name>
    <dbReference type="NCBI Taxonomy" id="9606"/>
    <lineage>
        <taxon>Eukaryota</taxon>
        <taxon>Metazoa</taxon>
        <taxon>Chordata</taxon>
        <taxon>Craniata</taxon>
        <taxon>Vertebrata</taxon>
        <taxon>Euteleostomi</taxon>
        <taxon>Mammalia</taxon>
        <taxon>Eutheria</taxon>
        <taxon>Euarchontoglires</taxon>
        <taxon>Primates</taxon>
        <taxon>Haplorrhini</taxon>
        <taxon>Catarrhini</taxon>
        <taxon>Hominidae</taxon>
        <taxon>Homo</taxon>
    </lineage>
</organism>
<protein>
    <recommendedName>
        <fullName>Tripartite motif-containing protein 67</fullName>
    </recommendedName>
    <alternativeName>
        <fullName>TRIM9-like protein</fullName>
    </alternativeName>
</protein>
<keyword id="KW-0002">3D-structure</keyword>
<keyword id="KW-0025">Alternative splicing</keyword>
<keyword id="KW-0175">Coiled coil</keyword>
<keyword id="KW-0963">Cytoplasm</keyword>
<keyword id="KW-0206">Cytoskeleton</keyword>
<keyword id="KW-0479">Metal-binding</keyword>
<keyword id="KW-1267">Proteomics identification</keyword>
<keyword id="KW-1185">Reference proteome</keyword>
<keyword id="KW-0677">Repeat</keyword>
<keyword id="KW-0862">Zinc</keyword>
<keyword id="KW-0863">Zinc-finger</keyword>
<gene>
    <name type="primary">TRIM67</name>
    <name type="synonym">TNL</name>
</gene>
<proteinExistence type="evidence at protein level"/>
<accession>Q6ZTA4</accession>
<accession>Q5TER7</accession>
<accession>Q5TER8</accession>
<accession>Q7Z4K7</accession>
<feature type="chain" id="PRO_0000256864" description="Tripartite motif-containing protein 67">
    <location>
        <begin position="1"/>
        <end position="783"/>
    </location>
</feature>
<feature type="domain" description="COS" evidence="6">
    <location>
        <begin position="448"/>
        <end position="506"/>
    </location>
</feature>
<feature type="domain" description="Fibronectin type-III" evidence="4">
    <location>
        <begin position="513"/>
        <end position="607"/>
    </location>
</feature>
<feature type="domain" description="B30.2/SPRY" evidence="5">
    <location>
        <begin position="589"/>
        <end position="780"/>
    </location>
</feature>
<feature type="zinc finger region" description="RING-type; degenerate">
    <location>
        <begin position="7"/>
        <end position="42"/>
    </location>
</feature>
<feature type="zinc finger region" description="B box-type 1; degenerate" evidence="3">
    <location>
        <begin position="206"/>
        <end position="253"/>
    </location>
</feature>
<feature type="zinc finger region" description="B box-type 2" evidence="3">
    <location>
        <begin position="298"/>
        <end position="340"/>
    </location>
</feature>
<feature type="region of interest" description="Disordered" evidence="7">
    <location>
        <begin position="247"/>
        <end position="295"/>
    </location>
</feature>
<feature type="coiled-coil region" evidence="2">
    <location>
        <begin position="345"/>
        <end position="382"/>
    </location>
</feature>
<feature type="compositionally biased region" description="Pro residues" evidence="7">
    <location>
        <begin position="252"/>
        <end position="261"/>
    </location>
</feature>
<feature type="compositionally biased region" description="Gly residues" evidence="7">
    <location>
        <begin position="275"/>
        <end position="293"/>
    </location>
</feature>
<feature type="binding site" evidence="3">
    <location>
        <position position="303"/>
    </location>
    <ligand>
        <name>Zn(2+)</name>
        <dbReference type="ChEBI" id="CHEBI:29105"/>
    </ligand>
</feature>
<feature type="binding site" evidence="3">
    <location>
        <position position="306"/>
    </location>
    <ligand>
        <name>Zn(2+)</name>
        <dbReference type="ChEBI" id="CHEBI:29105"/>
    </ligand>
</feature>
<feature type="binding site" evidence="3">
    <location>
        <position position="326"/>
    </location>
    <ligand>
        <name>Zn(2+)</name>
        <dbReference type="ChEBI" id="CHEBI:29105"/>
    </ligand>
</feature>
<feature type="binding site" evidence="3">
    <location>
        <position position="332"/>
    </location>
    <ligand>
        <name>Zn(2+)</name>
        <dbReference type="ChEBI" id="CHEBI:29105"/>
    </ligand>
</feature>
<feature type="splice variant" id="VSP_021359" description="In isoform 2." evidence="8">
    <location>
        <begin position="42"/>
        <end position="81"/>
    </location>
</feature>
<feature type="splice variant" id="VSP_021360" description="In isoform 2." evidence="8">
    <location>
        <begin position="251"/>
        <end position="272"/>
    </location>
</feature>
<feature type="sequence conflict" description="In Ref. 3; BAC86689." evidence="9" ref="3">
    <original>C</original>
    <variation>R</variation>
    <location>
        <position position="22"/>
    </location>
</feature>
<feature type="sequence conflict" description="In Ref. 3; BAC86689." evidence="9" ref="3">
    <original>M</original>
    <variation>V</variation>
    <location>
        <position position="679"/>
    </location>
</feature>
<feature type="turn" evidence="10">
    <location>
        <begin position="614"/>
        <end position="616"/>
    </location>
</feature>
<feature type="strand" evidence="10">
    <location>
        <begin position="621"/>
        <end position="624"/>
    </location>
</feature>
<feature type="turn" evidence="10">
    <location>
        <begin position="625"/>
        <end position="628"/>
    </location>
</feature>
<feature type="strand" evidence="10">
    <location>
        <begin position="629"/>
        <end position="636"/>
    </location>
</feature>
<feature type="strand" evidence="10">
    <location>
        <begin position="638"/>
        <end position="643"/>
    </location>
</feature>
<feature type="strand" evidence="10">
    <location>
        <begin position="646"/>
        <end position="660"/>
    </location>
</feature>
<feature type="strand" evidence="10">
    <location>
        <begin position="667"/>
        <end position="671"/>
    </location>
</feature>
<feature type="strand" evidence="10">
    <location>
        <begin position="677"/>
        <end position="679"/>
    </location>
</feature>
<feature type="strand" evidence="10">
    <location>
        <begin position="687"/>
        <end position="692"/>
    </location>
</feature>
<feature type="strand" evidence="10">
    <location>
        <begin position="694"/>
        <end position="701"/>
    </location>
</feature>
<feature type="strand" evidence="10">
    <location>
        <begin position="704"/>
        <end position="710"/>
    </location>
</feature>
<feature type="strand" evidence="10">
    <location>
        <begin position="718"/>
        <end position="724"/>
    </location>
</feature>
<feature type="turn" evidence="10">
    <location>
        <begin position="725"/>
        <end position="728"/>
    </location>
</feature>
<feature type="strand" evidence="10">
    <location>
        <begin position="729"/>
        <end position="734"/>
    </location>
</feature>
<feature type="strand" evidence="10">
    <location>
        <begin position="743"/>
        <end position="746"/>
    </location>
</feature>
<feature type="strand" evidence="10">
    <location>
        <begin position="751"/>
        <end position="757"/>
    </location>
</feature>
<feature type="strand" evidence="10">
    <location>
        <begin position="761"/>
        <end position="769"/>
    </location>
</feature>
<name>TRI67_HUMAN</name>
<comment type="subcellular location">
    <subcellularLocation>
        <location evidence="1">Cytoplasm</location>
    </subcellularLocation>
    <subcellularLocation>
        <location evidence="1">Cytoplasm</location>
        <location evidence="1">Cytoskeleton</location>
    </subcellularLocation>
    <text evidence="1">Microtubule-associated.</text>
</comment>
<comment type="alternative products">
    <event type="alternative splicing"/>
    <isoform>
        <id>Q6ZTA4-3</id>
        <name>1</name>
        <sequence type="displayed"/>
    </isoform>
    <isoform>
        <id>Q6ZTA4-2</id>
        <name>2</name>
        <sequence type="described" ref="VSP_021359 VSP_021360"/>
    </isoform>
</comment>
<comment type="similarity">
    <text evidence="9">Belongs to the TRIM/RBCC family.</text>
</comment>
<comment type="sequence caution" evidence="9">
    <conflict type="miscellaneous discrepancy">
        <sequence resource="EMBL-CDS" id="BAC86689"/>
    </conflict>
    <text>Probable cloning artifact.</text>
</comment>
<sequence>MEEELKCPVCGSLFREPIILPCSHNVCLPCARTIAVQTPDGEQHLPQPLLLSRGSGLQAGAAAAASLEHDAAAGPACGGAGGSAAGGLGGGAGGGGDHADKLSLYSETDSGYGSYTPSLKSPNGVRVLPMVPAPPGSSAAAARGAACSSLSSSSSSITCPQCHRSASLDHRGLRGFQRNRLLEAIVQRYQQGRGAVPGTSAAAAVAICQLCDRTPPEPAATLCEQCDVLYCSACQLKCHPSRGPFAKHRLVQPPPPPPPPAEAASGPTGTAQGAPSGGGGCKSPGGAGAGATGGSTARKFPTCPEHEMENYSMYCVSCRTPVCYLCLEEGRHAKHEVKPLGAMWKQHKAQLSQALNGVSDKAKEAKEFLVQLKNILQQIQENGLDYEACLVAQCDALVDALTRQKAKLLTKVTKEREHKLKMVWDQINHCTLKLRQSTGLMEYCLEVIKENDPSGFLQISDALIKRVQVSQEQWVKGALEPKVSAEFDLTLDSEPLLQAIHQLDFIQMKCRVPPVPLLQLEKCCTRNNSVTLAWRMPPFTHSPVDGYILELDDGAGGQFREVYVGKETLCTIDGLHFNSTYNARVKAFNSSGVGPYSKTVVLQTSDVAWFTFDPNSGHRDIILSNDNQTATCSSYDDRVVLGTAAFSKGVHYWELHVDRYDNHPDPAFGVARASVVKDMMLGKDDKAWAMYVDNNRSWFMHCNSHTNRTEGGVCKGATVGVLLDLNKHTLTFFINGQQQGPTAFSHVDGVFMPALSLNRNVQVTLHTGLEVPTNLGRPKLSGN</sequence>
<evidence type="ECO:0000250" key="1"/>
<evidence type="ECO:0000255" key="2"/>
<evidence type="ECO:0000255" key="3">
    <source>
        <dbReference type="PROSITE-ProRule" id="PRU00024"/>
    </source>
</evidence>
<evidence type="ECO:0000255" key="4">
    <source>
        <dbReference type="PROSITE-ProRule" id="PRU00316"/>
    </source>
</evidence>
<evidence type="ECO:0000255" key="5">
    <source>
        <dbReference type="PROSITE-ProRule" id="PRU00548"/>
    </source>
</evidence>
<evidence type="ECO:0000255" key="6">
    <source>
        <dbReference type="PROSITE-ProRule" id="PRU00586"/>
    </source>
</evidence>
<evidence type="ECO:0000256" key="7">
    <source>
        <dbReference type="SAM" id="MobiDB-lite"/>
    </source>
</evidence>
<evidence type="ECO:0000303" key="8">
    <source>
    </source>
</evidence>
<evidence type="ECO:0000305" key="9"/>
<evidence type="ECO:0007829" key="10">
    <source>
        <dbReference type="PDB" id="7QS5"/>
    </source>
</evidence>